<feature type="chain" id="PRO_0000128603" description="Large ribosomal subunit protein uL14c">
    <location>
        <begin position="1"/>
        <end position="123"/>
    </location>
</feature>
<proteinExistence type="inferred from homology"/>
<comment type="function">
    <text evidence="1">Binds to 23S rRNA.</text>
</comment>
<comment type="subunit">
    <text evidence="1">Part of the 50S ribosomal subunit.</text>
</comment>
<comment type="subcellular location">
    <subcellularLocation>
        <location>Plastid</location>
        <location>Chloroplast</location>
    </subcellularLocation>
</comment>
<comment type="similarity">
    <text evidence="1">Belongs to the universal ribosomal protein uL14 family.</text>
</comment>
<organism>
    <name type="scientific">Triticum aestivum</name>
    <name type="common">Wheat</name>
    <dbReference type="NCBI Taxonomy" id="4565"/>
    <lineage>
        <taxon>Eukaryota</taxon>
        <taxon>Viridiplantae</taxon>
        <taxon>Streptophyta</taxon>
        <taxon>Embryophyta</taxon>
        <taxon>Tracheophyta</taxon>
        <taxon>Spermatophyta</taxon>
        <taxon>Magnoliopsida</taxon>
        <taxon>Liliopsida</taxon>
        <taxon>Poales</taxon>
        <taxon>Poaceae</taxon>
        <taxon>BOP clade</taxon>
        <taxon>Pooideae</taxon>
        <taxon>Triticodae</taxon>
        <taxon>Triticeae</taxon>
        <taxon>Triticinae</taxon>
        <taxon>Triticum</taxon>
    </lineage>
</organism>
<reference key="1">
    <citation type="journal article" date="2000" name="Plant Mol. Biol. Rep.">
        <title>Chinese spring wheat (Triticum aestivum L.) chloroplast genome: complete sequence and contig clones.</title>
        <authorList>
            <person name="Ogihara Y."/>
            <person name="Isono K."/>
            <person name="Kojima T."/>
            <person name="Endo A."/>
            <person name="Hanaoka M."/>
            <person name="Shiina T."/>
            <person name="Terachi T."/>
            <person name="Utsugi S."/>
            <person name="Murata M."/>
            <person name="Mori N."/>
            <person name="Takumi S."/>
            <person name="Ikeo K."/>
            <person name="Gojobori T."/>
            <person name="Murai R."/>
            <person name="Murai K."/>
            <person name="Matsuoka Y."/>
            <person name="Ohnishi Y."/>
            <person name="Tajiri H."/>
            <person name="Tsunewaki K."/>
        </authorList>
    </citation>
    <scope>NUCLEOTIDE SEQUENCE [LARGE SCALE GENOMIC DNA]</scope>
    <source>
        <strain>cv. Chinese Spring</strain>
    </source>
</reference>
<evidence type="ECO:0000255" key="1">
    <source>
        <dbReference type="HAMAP-Rule" id="MF_01367"/>
    </source>
</evidence>
<evidence type="ECO:0000305" key="2"/>
<name>RK14_WHEAT</name>
<dbReference type="EMBL" id="AB042240">
    <property type="protein sequence ID" value="BAB47070.1"/>
    <property type="molecule type" value="Genomic_DNA"/>
</dbReference>
<dbReference type="RefSeq" id="NP_114294.1">
    <property type="nucleotide sequence ID" value="NC_002762.1"/>
</dbReference>
<dbReference type="SMR" id="Q95H51"/>
<dbReference type="STRING" id="4565.Q95H51"/>
<dbReference type="PaxDb" id="4565-EPlTAEP00000010056"/>
<dbReference type="EnsemblPlants" id="TraesARI1D03G00460990.1">
    <property type="protein sequence ID" value="TraesARI1D03G00460990.1.CDS1"/>
    <property type="gene ID" value="TraesARI1D03G00460990"/>
</dbReference>
<dbReference type="EnsemblPlants" id="TraesARI3B03G01635210.1">
    <property type="protein sequence ID" value="TraesARI3B03G01635210.1.CDS1"/>
    <property type="gene ID" value="TraesARI3B03G01635210"/>
</dbReference>
<dbReference type="EnsemblPlants" id="TraesCS2B03G0703200.1">
    <property type="protein sequence ID" value="TraesCS2B03G0703200.1.CDS1"/>
    <property type="gene ID" value="TraesCS2B03G0703200"/>
</dbReference>
<dbReference type="EnsemblPlants" id="TraesCS3B02G187700.1">
    <property type="protein sequence ID" value="TraesCS3B02G187700.1.cds1"/>
    <property type="gene ID" value="TraesCS3B02G187700"/>
</dbReference>
<dbReference type="EnsemblPlants" id="TraesCS3B03G0449800.1">
    <property type="protein sequence ID" value="TraesCS3B03G0449800.1.CDS1"/>
    <property type="gene ID" value="TraesCS3B03G0449800"/>
</dbReference>
<dbReference type="EnsemblPlants" id="TraesCS5D03G1230700.1">
    <property type="protein sequence ID" value="TraesCS5D03G1230700.1.CDS1"/>
    <property type="gene ID" value="TraesCS5D03G1230700"/>
</dbReference>
<dbReference type="EnsemblPlants" id="TraesJAG3B03G01616950.1">
    <property type="protein sequence ID" value="TraesJAG3B03G01616950.1.CDS1"/>
    <property type="gene ID" value="TraesJAG3B03G01616950"/>
</dbReference>
<dbReference type="EnsemblPlants" id="TraesJUL3B03G01621000.1">
    <property type="protein sequence ID" value="TraesJUL3B03G01621000.1.CDS1"/>
    <property type="gene ID" value="TraesJUL3B03G01621000"/>
</dbReference>
<dbReference type="EnsemblPlants" id="TraesKAR3B01G0143540.1">
    <property type="protein sequence ID" value="cds.TraesKAR3B01G0143540.1"/>
    <property type="gene ID" value="TraesKAR3B01G0143540"/>
</dbReference>
<dbReference type="EnsemblPlants" id="TraesKAR6B01G0219320.1">
    <property type="protein sequence ID" value="cds.TraesKAR6B01G0219320.1"/>
    <property type="gene ID" value="TraesKAR6B01G0219320"/>
</dbReference>
<dbReference type="EnsemblPlants" id="TraesKARUn01G0026880.1">
    <property type="protein sequence ID" value="cds.TraesKARUn01G0026880.1"/>
    <property type="gene ID" value="TraesKARUn01G0026880"/>
</dbReference>
<dbReference type="EnsemblPlants" id="TraesKARUn01G0027180.1">
    <property type="protein sequence ID" value="cds.TraesKARUn01G0027180.1"/>
    <property type="gene ID" value="TraesKARUn01G0027180"/>
</dbReference>
<dbReference type="EnsemblPlants" id="TraesKARUn01G0027300.1">
    <property type="protein sequence ID" value="cds.TraesKARUn01G0027300.1"/>
    <property type="gene ID" value="TraesKARUn01G0027300"/>
</dbReference>
<dbReference type="EnsemblPlants" id="TraesKARUn01G0028360.1">
    <property type="protein sequence ID" value="cds.TraesKARUn01G0028360.1"/>
    <property type="gene ID" value="TraesKARUn01G0028360"/>
</dbReference>
<dbReference type="EnsemblPlants" id="TraesKARUn01G0028780.1">
    <property type="protein sequence ID" value="cds.TraesKARUn01G0028780.1"/>
    <property type="gene ID" value="TraesKARUn01G0028780"/>
</dbReference>
<dbReference type="EnsemblPlants" id="TraesKARUn01G0029750.1">
    <property type="protein sequence ID" value="cds.TraesKARUn01G0029750.1"/>
    <property type="gene ID" value="TraesKARUn01G0029750"/>
</dbReference>
<dbReference type="EnsemblPlants" id="TraesKARUn01G0030100.1">
    <property type="protein sequence ID" value="cds.TraesKARUn01G0030100.1"/>
    <property type="gene ID" value="TraesKARUn01G0030100"/>
</dbReference>
<dbReference type="EnsemblPlants" id="TraesKARUn01G0030970.1">
    <property type="protein sequence ID" value="cds.TraesKARUn01G0030970.1"/>
    <property type="gene ID" value="TraesKARUn01G0030970"/>
</dbReference>
<dbReference type="EnsemblPlants" id="TraesKARUn01G0032910.1">
    <property type="protein sequence ID" value="cds.TraesKARUn01G0032910.1"/>
    <property type="gene ID" value="TraesKARUn01G0032910"/>
</dbReference>
<dbReference type="EnsemblPlants" id="TraesKARUn01G0032970.1">
    <property type="protein sequence ID" value="cds.TraesKARUn01G0032970.1"/>
    <property type="gene ID" value="TraesKARUn01G0032970"/>
</dbReference>
<dbReference type="EnsemblPlants" id="TraesKARUn01G0033280.1">
    <property type="protein sequence ID" value="cds.TraesKARUn01G0033280.1"/>
    <property type="gene ID" value="TraesKARUn01G0033280"/>
</dbReference>
<dbReference type="EnsemblPlants" id="TraesKARUn01G0033420.1">
    <property type="protein sequence ID" value="cds.TraesKARUn01G0033420.1"/>
    <property type="gene ID" value="TraesKARUn01G0033420"/>
</dbReference>
<dbReference type="EnsemblPlants" id="TraesKARUn01G0033450.1">
    <property type="protein sequence ID" value="cds.TraesKARUn01G0033450.1"/>
    <property type="gene ID" value="TraesKARUn01G0033450"/>
</dbReference>
<dbReference type="EnsemblPlants" id="TraesKARUn01G0033780.1">
    <property type="protein sequence ID" value="cds.TraesKARUn01G0033780.1"/>
    <property type="gene ID" value="TraesKARUn01G0033780"/>
</dbReference>
<dbReference type="EnsemblPlants" id="TraesKARUn01G0034100.1">
    <property type="protein sequence ID" value="cds.TraesKARUn01G0034100.1"/>
    <property type="gene ID" value="TraesKARUn01G0034100"/>
</dbReference>
<dbReference type="EnsemblPlants" id="TraesKARUn01G0034310.1">
    <property type="protein sequence ID" value="cds.TraesKARUn01G0034310.1"/>
    <property type="gene ID" value="TraesKARUn01G0034310"/>
</dbReference>
<dbReference type="EnsemblPlants" id="TraesKARUn01G0034370.1">
    <property type="protein sequence ID" value="cds.TraesKARUn01G0034370.1"/>
    <property type="gene ID" value="TraesKARUn01G0034370"/>
</dbReference>
<dbReference type="EnsemblPlants" id="TraesKARUn01G0034560.1">
    <property type="protein sequence ID" value="cds.TraesKARUn01G0034560.1"/>
    <property type="gene ID" value="TraesKARUn01G0034560"/>
</dbReference>
<dbReference type="EnsemblPlants" id="TraesKARUn01G0034630.1">
    <property type="protein sequence ID" value="cds.TraesKARUn01G0034630.1"/>
    <property type="gene ID" value="TraesKARUn01G0034630"/>
</dbReference>
<dbReference type="EnsemblPlants" id="TraesKARUn01G0034750.1">
    <property type="protein sequence ID" value="cds.TraesKARUn01G0034750.1"/>
    <property type="gene ID" value="TraesKARUn01G0034750"/>
</dbReference>
<dbReference type="EnsemblPlants" id="TraesKARUn01G0034840.1">
    <property type="protein sequence ID" value="cds.TraesKARUn01G0034840.1"/>
    <property type="gene ID" value="TraesKARUn01G0034840"/>
</dbReference>
<dbReference type="EnsemblPlants" id="TraesKARUn01G0036210.1">
    <property type="protein sequence ID" value="cds.TraesKARUn01G0036210.1"/>
    <property type="gene ID" value="TraesKARUn01G0036210"/>
</dbReference>
<dbReference type="EnsemblPlants" id="TraesKARUn01G0037060.1">
    <property type="protein sequence ID" value="cds.TraesKARUn01G0037060.1"/>
    <property type="gene ID" value="TraesKARUn01G0037060"/>
</dbReference>
<dbReference type="EnsemblPlants" id="TraesKARUn01G0037120.1">
    <property type="protein sequence ID" value="cds.TraesKARUn01G0037120.1"/>
    <property type="gene ID" value="TraesKARUn01G0037120"/>
</dbReference>
<dbReference type="EnsemblPlants" id="TraesKARUn01G0037480.1">
    <property type="protein sequence ID" value="cds.TraesKARUn01G0037480.1"/>
    <property type="gene ID" value="TraesKARUn01G0037480"/>
</dbReference>
<dbReference type="EnsemblPlants" id="TraesKARUn01G0060320.1">
    <property type="protein sequence ID" value="cds.TraesKARUn01G0060320.1"/>
    <property type="gene ID" value="TraesKARUn01G0060320"/>
</dbReference>
<dbReference type="EnsemblPlants" id="TraesKARUn01G0060550.1">
    <property type="protein sequence ID" value="cds.TraesKARUn01G0060550.1"/>
    <property type="gene ID" value="TraesKARUn01G0060550"/>
</dbReference>
<dbReference type="EnsemblPlants" id="TraesKARUn01G0060970.1">
    <property type="protein sequence ID" value="cds.TraesKARUn01G0060970.1"/>
    <property type="gene ID" value="TraesKARUn01G0060970"/>
</dbReference>
<dbReference type="EnsemblPlants" id="TraesKARUn01G0061410.1">
    <property type="protein sequence ID" value="cds.TraesKARUn01G0061410.1"/>
    <property type="gene ID" value="TraesKARUn01G0061410"/>
</dbReference>
<dbReference type="EnsemblPlants" id="TraesKARUn01G0064640.1">
    <property type="protein sequence ID" value="cds.TraesKARUn01G0064640.1"/>
    <property type="gene ID" value="TraesKARUn01G0064640"/>
</dbReference>
<dbReference type="EnsemblPlants" id="TraesKARUn01G0066110.1">
    <property type="protein sequence ID" value="cds.TraesKARUn01G0066110.1"/>
    <property type="gene ID" value="TraesKARUn01G0066110"/>
</dbReference>
<dbReference type="EnsemblPlants" id="TraesKARUn01G0066640.1">
    <property type="protein sequence ID" value="cds.TraesKARUn01G0066640.1"/>
    <property type="gene ID" value="TraesKARUn01G0066640"/>
</dbReference>
<dbReference type="EnsemblPlants" id="TraesKARUn01G0067180.1">
    <property type="protein sequence ID" value="cds.TraesKARUn01G0067180.1"/>
    <property type="gene ID" value="TraesKARUn01G0067180"/>
</dbReference>
<dbReference type="EnsemblPlants" id="TraesKARUn01G0067440.1">
    <property type="protein sequence ID" value="cds.TraesKARUn01G0067440.1"/>
    <property type="gene ID" value="TraesKARUn01G0067440"/>
</dbReference>
<dbReference type="EnsemblPlants" id="TraesKARUn01G0068680.1">
    <property type="protein sequence ID" value="cds.TraesKARUn01G0068680.1"/>
    <property type="gene ID" value="TraesKARUn01G0068680"/>
</dbReference>
<dbReference type="EnsemblPlants" id="TraesKARUn01G0068730.1">
    <property type="protein sequence ID" value="cds.TraesKARUn01G0068730.1"/>
    <property type="gene ID" value="TraesKARUn01G0068730"/>
</dbReference>
<dbReference type="EnsemblPlants" id="TraesKARUn01G0069020.1">
    <property type="protein sequence ID" value="cds.TraesKARUn01G0069020.1"/>
    <property type="gene ID" value="TraesKARUn01G0069020"/>
</dbReference>
<dbReference type="EnsemblPlants" id="TraesKARUn01G0069090.1">
    <property type="protein sequence ID" value="cds.TraesKARUn01G0069090.1"/>
    <property type="gene ID" value="TraesKARUn01G0069090"/>
</dbReference>
<dbReference type="EnsemblPlants" id="TraesKARUn01G0069180.1">
    <property type="protein sequence ID" value="cds.TraesKARUn01G0069180.1"/>
    <property type="gene ID" value="TraesKARUn01G0069180"/>
</dbReference>
<dbReference type="EnsemblPlants" id="TraesKARUn01G0069530.1">
    <property type="protein sequence ID" value="cds.TraesKARUn01G0069530.1"/>
    <property type="gene ID" value="TraesKARUn01G0069530"/>
</dbReference>
<dbReference type="EnsemblPlants" id="TraesKARUn01G0069980.1">
    <property type="protein sequence ID" value="cds.TraesKARUn01G0069980.1"/>
    <property type="gene ID" value="TraesKARUn01G0069980"/>
</dbReference>
<dbReference type="EnsemblPlants" id="TraesKARUn01G0070020.1">
    <property type="protein sequence ID" value="cds.TraesKARUn01G0070020.1"/>
    <property type="gene ID" value="TraesKARUn01G0070020"/>
</dbReference>
<dbReference type="EnsemblPlants" id="TraesKARUn01G0070110.1">
    <property type="protein sequence ID" value="cds.TraesKARUn01G0070110.1"/>
    <property type="gene ID" value="TraesKARUn01G0070110"/>
</dbReference>
<dbReference type="EnsemblPlants" id="TraesKARUn01G0071500.1">
    <property type="protein sequence ID" value="cds.TraesKARUn01G0071500.1"/>
    <property type="gene ID" value="TraesKARUn01G0071500"/>
</dbReference>
<dbReference type="EnsemblPlants" id="TraesKARUn01G0073700.1">
    <property type="protein sequence ID" value="cds.TraesKARUn01G0073700.1"/>
    <property type="gene ID" value="TraesKARUn01G0073700"/>
</dbReference>
<dbReference type="EnsemblPlants" id="TraesKARUn01G0075290.1">
    <property type="protein sequence ID" value="cds.TraesKARUn01G0075290.1"/>
    <property type="gene ID" value="TraesKARUn01G0075290"/>
</dbReference>
<dbReference type="EnsemblPlants" id="TraesKARUn01G0080910.1">
    <property type="protein sequence ID" value="cds.TraesKARUn01G0080910.1"/>
    <property type="gene ID" value="TraesKARUn01G0080910"/>
</dbReference>
<dbReference type="EnsemblPlants" id="TraesKARUn01G0083280.1">
    <property type="protein sequence ID" value="cds.TraesKARUn01G0083280.1"/>
    <property type="gene ID" value="TraesKARUn01G0083280"/>
</dbReference>
<dbReference type="EnsemblPlants" id="TraesKARUn01G0085990.1">
    <property type="protein sequence ID" value="cds.TraesKARUn01G0085990.1"/>
    <property type="gene ID" value="TraesKARUn01G0085990"/>
</dbReference>
<dbReference type="EnsemblPlants" id="TraesKARUn01G0087590.1">
    <property type="protein sequence ID" value="cds.TraesKARUn01G0087590.1"/>
    <property type="gene ID" value="TraesKARUn01G0087590"/>
</dbReference>
<dbReference type="EnsemblPlants" id="TraesKARUn01G0091870.1">
    <property type="protein sequence ID" value="cds.TraesKARUn01G0091870.1"/>
    <property type="gene ID" value="TraesKARUn01G0091870"/>
</dbReference>
<dbReference type="EnsemblPlants" id="TraesKARUn01G0092200.1">
    <property type="protein sequence ID" value="cds.TraesKARUn01G0092200.1"/>
    <property type="gene ID" value="TraesKARUn01G0092200"/>
</dbReference>
<dbReference type="EnsemblPlants" id="TraesKARUn01G0094130.1">
    <property type="protein sequence ID" value="cds.TraesKARUn01G0094130.1"/>
    <property type="gene ID" value="TraesKARUn01G0094130"/>
</dbReference>
<dbReference type="EnsemblPlants" id="TraesKARUn01G0096100.1">
    <property type="protein sequence ID" value="cds.TraesKARUn01G0096100.1"/>
    <property type="gene ID" value="TraesKARUn01G0096100"/>
</dbReference>
<dbReference type="EnsemblPlants" id="TraesKARUn01G0097050.1">
    <property type="protein sequence ID" value="cds.TraesKARUn01G0097050.1"/>
    <property type="gene ID" value="TraesKARUn01G0097050"/>
</dbReference>
<dbReference type="EnsemblPlants" id="TraesKARUn01G0097100.1">
    <property type="protein sequence ID" value="cds.TraesKARUn01G0097100.1"/>
    <property type="gene ID" value="TraesKARUn01G0097100"/>
</dbReference>
<dbReference type="EnsemblPlants" id="TraesKARUn01G0099740.1">
    <property type="protein sequence ID" value="cds.TraesKARUn01G0099740.1"/>
    <property type="gene ID" value="TraesKARUn01G0099740"/>
</dbReference>
<dbReference type="EnsemblPlants" id="TraesKARUn01G0100310.1">
    <property type="protein sequence ID" value="cds.TraesKARUn01G0100310.1"/>
    <property type="gene ID" value="TraesKARUn01G0100310"/>
</dbReference>
<dbReference type="EnsemblPlants" id="TraesKARUn01G0102660.1">
    <property type="protein sequence ID" value="cds.TraesKARUn01G0102660.1"/>
    <property type="gene ID" value="TraesKARUn01G0102660"/>
</dbReference>
<dbReference type="EnsemblPlants" id="TraesKARUn01G0104970.1">
    <property type="protein sequence ID" value="cds.TraesKARUn01G0104970.1"/>
    <property type="gene ID" value="TraesKARUn01G0104970"/>
</dbReference>
<dbReference type="EnsemblPlants" id="TraesKARUn01G0105050.1">
    <property type="protein sequence ID" value="cds.TraesKARUn01G0105050.1"/>
    <property type="gene ID" value="TraesKARUn01G0105050"/>
</dbReference>
<dbReference type="EnsemblPlants" id="TraesKARUn01G0106270.1">
    <property type="protein sequence ID" value="cds.TraesKARUn01G0106270.1"/>
    <property type="gene ID" value="TraesKARUn01G0106270"/>
</dbReference>
<dbReference type="EnsemblPlants" id="TraesKARUn01G0106530.1">
    <property type="protein sequence ID" value="cds.TraesKARUn01G0106530.1"/>
    <property type="gene ID" value="TraesKARUn01G0106530"/>
</dbReference>
<dbReference type="EnsemblPlants" id="TraesKARUn01G0107590.1">
    <property type="protein sequence ID" value="cds.TraesKARUn01G0107590.1"/>
    <property type="gene ID" value="TraesKARUn01G0107590"/>
</dbReference>
<dbReference type="EnsemblPlants" id="TraesKARUn01G0108140.1">
    <property type="protein sequence ID" value="cds.TraesKARUn01G0108140.1"/>
    <property type="gene ID" value="TraesKARUn01G0108140"/>
</dbReference>
<dbReference type="EnsemblPlants" id="TraesKARUn01G0108280.1">
    <property type="protein sequence ID" value="cds.TraesKARUn01G0108280.1"/>
    <property type="gene ID" value="TraesKARUn01G0108280"/>
</dbReference>
<dbReference type="EnsemblPlants" id="TraesKARUn01G0108470.1">
    <property type="protein sequence ID" value="cds.TraesKARUn01G0108470.1"/>
    <property type="gene ID" value="TraesKARUn01G0108470"/>
</dbReference>
<dbReference type="EnsemblPlants" id="TraesKARUn01G0108710.1">
    <property type="protein sequence ID" value="cds.TraesKARUn01G0108710.1"/>
    <property type="gene ID" value="TraesKARUn01G0108710"/>
</dbReference>
<dbReference type="EnsemblPlants" id="TraesKARUn01G0110090.1">
    <property type="protein sequence ID" value="cds.TraesKARUn01G0110090.1"/>
    <property type="gene ID" value="TraesKARUn01G0110090"/>
</dbReference>
<dbReference type="EnsemblPlants" id="TraesKARUn01G0110540.1">
    <property type="protein sequence ID" value="cds.TraesKARUn01G0110540.1"/>
    <property type="gene ID" value="TraesKARUn01G0110540"/>
</dbReference>
<dbReference type="EnsemblPlants" id="TraesKARUn01G0112380.1">
    <property type="protein sequence ID" value="cds.TraesKARUn01G0112380.1"/>
    <property type="gene ID" value="TraesKARUn01G0112380"/>
</dbReference>
<dbReference type="EnsemblPlants" id="TraesKARUn01G0112440.1">
    <property type="protein sequence ID" value="cds.TraesKARUn01G0112440.1"/>
    <property type="gene ID" value="TraesKARUn01G0112440"/>
</dbReference>
<dbReference type="EnsemblPlants" id="TraesKARUn01G0113030.1">
    <property type="protein sequence ID" value="cds.TraesKARUn01G0113030.1"/>
    <property type="gene ID" value="TraesKARUn01G0113030"/>
</dbReference>
<dbReference type="EnsemblPlants" id="TraesKARUn01G0114290.1">
    <property type="protein sequence ID" value="cds.TraesKARUn01G0114290.1"/>
    <property type="gene ID" value="TraesKARUn01G0114290"/>
</dbReference>
<dbReference type="EnsemblPlants" id="TraesKARUn01G0114890.1">
    <property type="protein sequence ID" value="cds.TraesKARUn01G0114890.1"/>
    <property type="gene ID" value="TraesKARUn01G0114890"/>
</dbReference>
<dbReference type="EnsemblPlants" id="TraesKARUn01G0116010.1">
    <property type="protein sequence ID" value="cds.TraesKARUn01G0116010.1"/>
    <property type="gene ID" value="TraesKARUn01G0116010"/>
</dbReference>
<dbReference type="EnsemblPlants" id="TraesKARUn01G0116590.1">
    <property type="protein sequence ID" value="cds.TraesKARUn01G0116590.1"/>
    <property type="gene ID" value="TraesKARUn01G0116590"/>
</dbReference>
<dbReference type="EnsemblPlants" id="TraesKARUn01G0118680.1">
    <property type="protein sequence ID" value="cds.TraesKARUn01G0118680.1"/>
    <property type="gene ID" value="TraesKARUn01G0118680"/>
</dbReference>
<dbReference type="EnsemblPlants" id="TraesKARUn01G0123960.1">
    <property type="protein sequence ID" value="cds.TraesKARUn01G0123960.1"/>
    <property type="gene ID" value="TraesKARUn01G0123960"/>
</dbReference>
<dbReference type="EnsemblPlants" id="TraesKARUn01G0125590.1">
    <property type="protein sequence ID" value="cds.TraesKARUn01G0125590.1"/>
    <property type="gene ID" value="TraesKARUn01G0125590"/>
</dbReference>
<dbReference type="EnsemblPlants" id="TraesKARUn01G0125790.1">
    <property type="protein sequence ID" value="cds.TraesKARUn01G0125790.1"/>
    <property type="gene ID" value="TraesKARUn01G0125790"/>
</dbReference>
<dbReference type="EnsemblPlants" id="TraesKARUn01G0128100.1">
    <property type="protein sequence ID" value="cds.TraesKARUn01G0128100.1"/>
    <property type="gene ID" value="TraesKARUn01G0128100"/>
</dbReference>
<dbReference type="EnsemblPlants" id="TraesKARUn01G0129210.1">
    <property type="protein sequence ID" value="cds.TraesKARUn01G0129210.1"/>
    <property type="gene ID" value="TraesKARUn01G0129210"/>
</dbReference>
<dbReference type="EnsemblPlants" id="TraesKARUn01G0130410.1">
    <property type="protein sequence ID" value="cds.TraesKARUn01G0130410.1"/>
    <property type="gene ID" value="TraesKARUn01G0130410"/>
</dbReference>
<dbReference type="EnsemblPlants" id="TraesKARUn01G0132200.1">
    <property type="protein sequence ID" value="cds.TraesKARUn01G0132200.1"/>
    <property type="gene ID" value="TraesKARUn01G0132200"/>
</dbReference>
<dbReference type="EnsemblPlants" id="TraesKARUn01G0132440.1">
    <property type="protein sequence ID" value="cds.TraesKARUn01G0132440.1"/>
    <property type="gene ID" value="TraesKARUn01G0132440"/>
</dbReference>
<dbReference type="EnsemblPlants" id="TraesKARUn01G0132490.1">
    <property type="protein sequence ID" value="cds.TraesKARUn01G0132490.1"/>
    <property type="gene ID" value="TraesKARUn01G0132490"/>
</dbReference>
<dbReference type="EnsemblPlants" id="TraesKARUn01G0132710.1">
    <property type="protein sequence ID" value="cds.TraesKARUn01G0132710.1"/>
    <property type="gene ID" value="TraesKARUn01G0132710"/>
</dbReference>
<dbReference type="EnsemblPlants" id="TraesKARUn01G0132900.1">
    <property type="protein sequence ID" value="cds.TraesKARUn01G0132900.1"/>
    <property type="gene ID" value="TraesKARUn01G0132900"/>
</dbReference>
<dbReference type="EnsemblPlants" id="TraesKARUn01G0134130.1">
    <property type="protein sequence ID" value="cds.TraesKARUn01G0134130.1"/>
    <property type="gene ID" value="TraesKARUn01G0134130"/>
</dbReference>
<dbReference type="EnsemblPlants" id="TraesKARUn01G0136620.1">
    <property type="protein sequence ID" value="cds.TraesKARUn01G0136620.1"/>
    <property type="gene ID" value="TraesKARUn01G0136620"/>
</dbReference>
<dbReference type="EnsemblPlants" id="TraesKARUn01G0137430.1">
    <property type="protein sequence ID" value="cds.TraesKARUn01G0137430.1"/>
    <property type="gene ID" value="TraesKARUn01G0137430"/>
</dbReference>
<dbReference type="EnsemblPlants" id="TraesKARUn01G0137650.1">
    <property type="protein sequence ID" value="cds.TraesKARUn01G0137650.1"/>
    <property type="gene ID" value="TraesKARUn01G0137650"/>
</dbReference>
<dbReference type="EnsemblPlants" id="TraesKARUn01G0137960.1">
    <property type="protein sequence ID" value="cds.TraesKARUn01G0137960.1"/>
    <property type="gene ID" value="TraesKARUn01G0137960"/>
</dbReference>
<dbReference type="EnsemblPlants" id="TraesKARUn01G0142640.1">
    <property type="protein sequence ID" value="cds.TraesKARUn01G0142640.1"/>
    <property type="gene ID" value="TraesKARUn01G0142640"/>
</dbReference>
<dbReference type="EnsemblPlants" id="TraesKARUn01G0143710.1">
    <property type="protein sequence ID" value="cds.TraesKARUn01G0143710.1"/>
    <property type="gene ID" value="TraesKARUn01G0143710"/>
</dbReference>
<dbReference type="EnsemblPlants" id="TraesKARUn01G0144930.1">
    <property type="protein sequence ID" value="cds.TraesKARUn01G0144930.1"/>
    <property type="gene ID" value="TraesKARUn01G0144930"/>
</dbReference>
<dbReference type="EnsemblPlants" id="TraesKARUn01G0146530.1">
    <property type="protein sequence ID" value="cds.TraesKARUn01G0146530.1"/>
    <property type="gene ID" value="TraesKARUn01G0146530"/>
</dbReference>
<dbReference type="EnsemblPlants" id="TraesKARUn01G0147670.1">
    <property type="protein sequence ID" value="cds.TraesKARUn01G0147670.1"/>
    <property type="gene ID" value="TraesKARUn01G0147670"/>
</dbReference>
<dbReference type="EnsemblPlants" id="TraesKARUn01G0147790.1">
    <property type="protein sequence ID" value="cds.TraesKARUn01G0147790.1"/>
    <property type="gene ID" value="TraesKARUn01G0147790"/>
</dbReference>
<dbReference type="EnsemblPlants" id="TraesKARUn01G0149020.1">
    <property type="protein sequence ID" value="cds.TraesKARUn01G0149020.1"/>
    <property type="gene ID" value="TraesKARUn01G0149020"/>
</dbReference>
<dbReference type="EnsemblPlants" id="TraesKARUn01G0149470.1">
    <property type="protein sequence ID" value="cds.TraesKARUn01G0149470.1"/>
    <property type="gene ID" value="TraesKARUn01G0149470"/>
</dbReference>
<dbReference type="EnsemblPlants" id="TraesKARUn01G0150040.1">
    <property type="protein sequence ID" value="cds.TraesKARUn01G0150040.1"/>
    <property type="gene ID" value="TraesKARUn01G0150040"/>
</dbReference>
<dbReference type="EnsemblPlants" id="TraesKARUn01G0150620.1">
    <property type="protein sequence ID" value="cds.TraesKARUn01G0150620.1"/>
    <property type="gene ID" value="TraesKARUn01G0150620"/>
</dbReference>
<dbReference type="EnsemblPlants" id="TraesKARUn01G0152070.1">
    <property type="protein sequence ID" value="cds.TraesKARUn01G0152070.1"/>
    <property type="gene ID" value="TraesKARUn01G0152070"/>
</dbReference>
<dbReference type="EnsemblPlants" id="TraesKARUn01G0152630.1">
    <property type="protein sequence ID" value="cds.TraesKARUn01G0152630.1"/>
    <property type="gene ID" value="TraesKARUn01G0152630"/>
</dbReference>
<dbReference type="EnsemblPlants" id="TraesKARUn01G0153370.1">
    <property type="protein sequence ID" value="cds.TraesKARUn01G0153370.1"/>
    <property type="gene ID" value="TraesKARUn01G0153370"/>
</dbReference>
<dbReference type="EnsemblPlants" id="TraesKARUn01G0154100.1">
    <property type="protein sequence ID" value="cds.TraesKARUn01G0154100.1"/>
    <property type="gene ID" value="TraesKARUn01G0154100"/>
</dbReference>
<dbReference type="EnsemblPlants" id="TraesKARUn01G0154800.1">
    <property type="protein sequence ID" value="cds.TraesKARUn01G0154800.1"/>
    <property type="gene ID" value="TraesKARUn01G0154800"/>
</dbReference>
<dbReference type="EnsemblPlants" id="TraesKARUn01G0155170.1">
    <property type="protein sequence ID" value="cds.TraesKARUn01G0155170.1"/>
    <property type="gene ID" value="TraesKARUn01G0155170"/>
</dbReference>
<dbReference type="EnsemblPlants" id="TraesKARUn01G0156450.1">
    <property type="protein sequence ID" value="cds.TraesKARUn01G0156450.1"/>
    <property type="gene ID" value="TraesKARUn01G0156450"/>
</dbReference>
<dbReference type="EnsemblPlants" id="TraesKARUn01G0157390.1">
    <property type="protein sequence ID" value="cds.TraesKARUn01G0157390.1"/>
    <property type="gene ID" value="TraesKARUn01G0157390"/>
</dbReference>
<dbReference type="EnsemblPlants" id="TraesKARUn01G0157550.1">
    <property type="protein sequence ID" value="cds.TraesKARUn01G0157550.1"/>
    <property type="gene ID" value="TraesKARUn01G0157550"/>
</dbReference>
<dbReference type="EnsemblPlants" id="TraesKARUn01G0158700.1">
    <property type="protein sequence ID" value="cds.TraesKARUn01G0158700.1"/>
    <property type="gene ID" value="TraesKARUn01G0158700"/>
</dbReference>
<dbReference type="EnsemblPlants" id="TraesKARUn01G0159360.1">
    <property type="protein sequence ID" value="cds.TraesKARUn01G0159360.1"/>
    <property type="gene ID" value="TraesKARUn01G0159360"/>
</dbReference>
<dbReference type="EnsemblPlants" id="TraesKARUn01G0159720.1">
    <property type="protein sequence ID" value="cds.TraesKARUn01G0159720.1"/>
    <property type="gene ID" value="TraesKARUn01G0159720"/>
</dbReference>
<dbReference type="EnsemblPlants" id="TraesKARUn01G0159830.1">
    <property type="protein sequence ID" value="cds.TraesKARUn01G0159830.1"/>
    <property type="gene ID" value="TraesKARUn01G0159830"/>
</dbReference>
<dbReference type="EnsemblPlants" id="TraesKARUn01G0160980.1">
    <property type="protein sequence ID" value="cds.TraesKARUn01G0160980.1"/>
    <property type="gene ID" value="TraesKARUn01G0160980"/>
</dbReference>
<dbReference type="EnsemblPlants" id="TraesKARUn01G0161540.1">
    <property type="protein sequence ID" value="cds.TraesKARUn01G0161540.1"/>
    <property type="gene ID" value="TraesKARUn01G0161540"/>
</dbReference>
<dbReference type="EnsemblPlants" id="TraesKARUn01G0163160.1">
    <property type="protein sequence ID" value="cds.TraesKARUn01G0163160.1"/>
    <property type="gene ID" value="TraesKARUn01G0163160"/>
</dbReference>
<dbReference type="EnsemblPlants" id="TraesKARUn01G0163400.1">
    <property type="protein sequence ID" value="cds.TraesKARUn01G0163400.1"/>
    <property type="gene ID" value="TraesKARUn01G0163400"/>
</dbReference>
<dbReference type="EnsemblPlants" id="TraesKARUn01G0163480.1">
    <property type="protein sequence ID" value="cds.TraesKARUn01G0163480.1"/>
    <property type="gene ID" value="TraesKARUn01G0163480"/>
</dbReference>
<dbReference type="EnsemblPlants" id="TraesKARUn01G0165890.1">
    <property type="protein sequence ID" value="cds.TraesKARUn01G0165890.1"/>
    <property type="gene ID" value="TraesKARUn01G0165890"/>
</dbReference>
<dbReference type="EnsemblPlants" id="TraesKARUn01G0165990.1">
    <property type="protein sequence ID" value="cds.TraesKARUn01G0165990.1"/>
    <property type="gene ID" value="TraesKARUn01G0165990"/>
</dbReference>
<dbReference type="EnsemblPlants" id="TraesKARUn01G0166120.1">
    <property type="protein sequence ID" value="cds.TraesKARUn01G0166120.1"/>
    <property type="gene ID" value="TraesKARUn01G0166120"/>
</dbReference>
<dbReference type="EnsemblPlants" id="TraesKARUn01G0167010.1">
    <property type="protein sequence ID" value="cds.TraesKARUn01G0167010.1"/>
    <property type="gene ID" value="TraesKARUn01G0167010"/>
</dbReference>
<dbReference type="EnsemblPlants" id="TraesKARUn01G0167410.1">
    <property type="protein sequence ID" value="cds.TraesKARUn01G0167410.1"/>
    <property type="gene ID" value="TraesKARUn01G0167410"/>
</dbReference>
<dbReference type="EnsemblPlants" id="TraesKARUn01G0169270.1">
    <property type="protein sequence ID" value="cds.TraesKARUn01G0169270.1"/>
    <property type="gene ID" value="TraesKARUn01G0169270"/>
</dbReference>
<dbReference type="EnsemblPlants" id="TraesKARUn01G0170810.1">
    <property type="protein sequence ID" value="cds.TraesKARUn01G0170810.1"/>
    <property type="gene ID" value="TraesKARUn01G0170810"/>
</dbReference>
<dbReference type="EnsemblPlants" id="TraesKARUn01G0171450.1">
    <property type="protein sequence ID" value="cds.TraesKARUn01G0171450.1"/>
    <property type="gene ID" value="TraesKARUn01G0171450"/>
</dbReference>
<dbReference type="EnsemblPlants" id="TraesKARUn01G0172350.1">
    <property type="protein sequence ID" value="cds.TraesKARUn01G0172350.1"/>
    <property type="gene ID" value="TraesKARUn01G0172350"/>
</dbReference>
<dbReference type="EnsemblPlants" id="TraesKARUn01G0173150.1">
    <property type="protein sequence ID" value="cds.TraesKARUn01G0173150.1"/>
    <property type="gene ID" value="TraesKARUn01G0173150"/>
</dbReference>
<dbReference type="EnsemblPlants" id="TraesKARUn01G0173680.1">
    <property type="protein sequence ID" value="cds.TraesKARUn01G0173680.1"/>
    <property type="gene ID" value="TraesKARUn01G0173680"/>
</dbReference>
<dbReference type="EnsemblPlants" id="TraesKARUn01G0173930.1">
    <property type="protein sequence ID" value="cds.TraesKARUn01G0173930.1"/>
    <property type="gene ID" value="TraesKARUn01G0173930"/>
</dbReference>
<dbReference type="EnsemblPlants" id="TraesKARUn01G0174430.1">
    <property type="protein sequence ID" value="cds.TraesKARUn01G0174430.1"/>
    <property type="gene ID" value="TraesKARUn01G0174430"/>
</dbReference>
<dbReference type="EnsemblPlants" id="TraesKARUn01G0175110.1">
    <property type="protein sequence ID" value="cds.TraesKARUn01G0175110.1"/>
    <property type="gene ID" value="TraesKARUn01G0175110"/>
</dbReference>
<dbReference type="EnsemblPlants" id="TraesKARUn01G0176510.1">
    <property type="protein sequence ID" value="cds.TraesKARUn01G0176510.1"/>
    <property type="gene ID" value="TraesKARUn01G0176510"/>
</dbReference>
<dbReference type="EnsemblPlants" id="TraesKARUn01G0177030.1">
    <property type="protein sequence ID" value="cds.TraesKARUn01G0177030.1"/>
    <property type="gene ID" value="TraesKARUn01G0177030"/>
</dbReference>
<dbReference type="EnsemblPlants" id="TraesKARUn01G0177940.1">
    <property type="protein sequence ID" value="cds.TraesKARUn01G0177940.1"/>
    <property type="gene ID" value="TraesKARUn01G0177940"/>
</dbReference>
<dbReference type="EnsemblPlants" id="TraesKARUn01G0178370.1">
    <property type="protein sequence ID" value="cds.TraesKARUn01G0178370.1"/>
    <property type="gene ID" value="TraesKARUn01G0178370"/>
</dbReference>
<dbReference type="EnsemblPlants" id="TraesKARUn01G0178610.1">
    <property type="protein sequence ID" value="cds.TraesKARUn01G0178610.1"/>
    <property type="gene ID" value="TraesKARUn01G0178610"/>
</dbReference>
<dbReference type="EnsemblPlants" id="TraesKARUn01G0178920.1">
    <property type="protein sequence ID" value="cds.TraesKARUn01G0178920.1"/>
    <property type="gene ID" value="TraesKARUn01G0178920"/>
</dbReference>
<dbReference type="EnsemblPlants" id="TraesKARUn01G0181510.1">
    <property type="protein sequence ID" value="cds.TraesKARUn01G0181510.1"/>
    <property type="gene ID" value="TraesKARUn01G0181510"/>
</dbReference>
<dbReference type="EnsemblPlants" id="TraesKARUn01G0181920.1">
    <property type="protein sequence ID" value="cds.TraesKARUn01G0181920.1"/>
    <property type="gene ID" value="TraesKARUn01G0181920"/>
</dbReference>
<dbReference type="EnsemblPlants" id="TraesKARUn01G0182680.1">
    <property type="protein sequence ID" value="cds.TraesKARUn01G0182680.1"/>
    <property type="gene ID" value="TraesKARUn01G0182680"/>
</dbReference>
<dbReference type="EnsemblPlants" id="TraesKARUn01G0184180.1">
    <property type="protein sequence ID" value="cds.TraesKARUn01G0184180.1"/>
    <property type="gene ID" value="TraesKARUn01G0184180"/>
</dbReference>
<dbReference type="EnsemblPlants" id="TraesKARUn01G0185270.1">
    <property type="protein sequence ID" value="cds.TraesKARUn01G0185270.1"/>
    <property type="gene ID" value="TraesKARUn01G0185270"/>
</dbReference>
<dbReference type="EnsemblPlants" id="TraesKARUn01G0187430.1">
    <property type="protein sequence ID" value="cds.TraesKARUn01G0187430.1"/>
    <property type="gene ID" value="TraesKARUn01G0187430"/>
</dbReference>
<dbReference type="EnsemblPlants" id="TraesKARUn01G0188580.1">
    <property type="protein sequence ID" value="cds.TraesKARUn01G0188580.1"/>
    <property type="gene ID" value="TraesKARUn01G0188580"/>
</dbReference>
<dbReference type="EnsemblPlants" id="TraesKARUn01G0189050.1">
    <property type="protein sequence ID" value="cds.TraesKARUn01G0189050.1"/>
    <property type="gene ID" value="TraesKARUn01G0189050"/>
</dbReference>
<dbReference type="EnsemblPlants" id="TraesKARUn01G0189430.1">
    <property type="protein sequence ID" value="cds.TraesKARUn01G0189430.1"/>
    <property type="gene ID" value="TraesKARUn01G0189430"/>
</dbReference>
<dbReference type="EnsemblPlants" id="TraesKARUn01G0189520.1">
    <property type="protein sequence ID" value="cds.TraesKARUn01G0189520.1"/>
    <property type="gene ID" value="TraesKARUn01G0189520"/>
</dbReference>
<dbReference type="EnsemblPlants" id="TraesKARUn01G0189740.1">
    <property type="protein sequence ID" value="cds.TraesKARUn01G0189740.1"/>
    <property type="gene ID" value="TraesKARUn01G0189740"/>
</dbReference>
<dbReference type="EnsemblPlants" id="TraesKARUn01G0191730.1">
    <property type="protein sequence ID" value="cds.TraesKARUn01G0191730.1"/>
    <property type="gene ID" value="TraesKARUn01G0191730"/>
</dbReference>
<dbReference type="EnsemblPlants" id="TraesKARUn01G0191810.1">
    <property type="protein sequence ID" value="cds.TraesKARUn01G0191810.1"/>
    <property type="gene ID" value="TraesKARUn01G0191810"/>
</dbReference>
<dbReference type="EnsemblPlants" id="TraesKARUn01G0192070.1">
    <property type="protein sequence ID" value="cds.TraesKARUn01G0192070.1"/>
    <property type="gene ID" value="TraesKARUn01G0192070"/>
</dbReference>
<dbReference type="EnsemblPlants" id="TraesLAC3B03G01549790.1">
    <property type="protein sequence ID" value="TraesLAC3B03G01549790.1.CDS1"/>
    <property type="gene ID" value="TraesLAC3B03G01549790"/>
</dbReference>
<dbReference type="EnsemblPlants" id="TraesLDM3B03G01608430.1">
    <property type="protein sequence ID" value="TraesLDM3B03G01608430.1.CDS1"/>
    <property type="gene ID" value="TraesLDM3B03G01608430"/>
</dbReference>
<dbReference type="EnsemblPlants" id="TraesNOR1A03G00037140.1">
    <property type="protein sequence ID" value="TraesNOR1A03G00037140.1.CDS1"/>
    <property type="gene ID" value="TraesNOR1A03G00037140"/>
</dbReference>
<dbReference type="EnsemblPlants" id="TraesNOR3B03G01628480.1">
    <property type="protein sequence ID" value="TraesNOR3B03G01628480.1.CDS1"/>
    <property type="gene ID" value="TraesNOR3B03G01628480"/>
</dbReference>
<dbReference type="EnsemblPlants" id="TraesPARA_EIv1.0_1003460.1">
    <property type="protein sequence ID" value="TraesPARA_EIv1.0_1003460.1.CDS1"/>
    <property type="gene ID" value="TraesPARA_EIv1.0_1003460"/>
</dbReference>
<dbReference type="EnsemblPlants" id="TraesPARA_EIv1.0_2644690.1">
    <property type="protein sequence ID" value="TraesPARA_EIv1.0_2644690.1.CDS1"/>
    <property type="gene ID" value="TraesPARA_EIv1.0_2644690"/>
</dbReference>
<dbReference type="EnsemblPlants" id="TraesPARA_EIv1.0_2645320.1">
    <property type="protein sequence ID" value="TraesPARA_EIv1.0_2645320.1.CDS1"/>
    <property type="gene ID" value="TraesPARA_EIv1.0_2645320"/>
</dbReference>
<dbReference type="EnsemblPlants" id="TraesPARA_EIv1.0_2647640.1">
    <property type="protein sequence ID" value="TraesPARA_EIv1.0_2647640.1.CDS1"/>
    <property type="gene ID" value="TraesPARA_EIv1.0_2647640"/>
</dbReference>
<dbReference type="EnsemblPlants" id="TraesPARA_EIv1.0_2653110.1">
    <property type="protein sequence ID" value="TraesPARA_EIv1.0_2653110.1.CDS1"/>
    <property type="gene ID" value="TraesPARA_EIv1.0_2653110"/>
</dbReference>
<dbReference type="EnsemblPlants" id="TraesRN1D0100324900.1">
    <property type="protein sequence ID" value="TraesRN1D0100324900.1"/>
    <property type="gene ID" value="TraesRN1D0100324900"/>
</dbReference>
<dbReference type="EnsemblPlants" id="TraesRN1D0100325100.1">
    <property type="protein sequence ID" value="TraesRN1D0100325100.1"/>
    <property type="gene ID" value="TraesRN1D0100325100"/>
</dbReference>
<dbReference type="EnsemblPlants" id="TraesRN1D0100325200.1">
    <property type="protein sequence ID" value="TraesRN1D0100325200.1"/>
    <property type="gene ID" value="TraesRN1D0100325200"/>
</dbReference>
<dbReference type="EnsemblPlants" id="TraesRN3A0101022700.1">
    <property type="protein sequence ID" value="TraesRN3A0101022700.1"/>
    <property type="gene ID" value="TraesRN3A0101022700"/>
</dbReference>
<dbReference type="EnsemblPlants" id="TraesRN3B0100440100.1">
    <property type="protein sequence ID" value="TraesRN3B0100440100.1"/>
    <property type="gene ID" value="TraesRN3B0100440100"/>
</dbReference>
<dbReference type="EnsemblPlants" id="TraesRN6D0100426800.1">
    <property type="protein sequence ID" value="TraesRN6D0100426800.1"/>
    <property type="gene ID" value="TraesRN6D0100426800"/>
</dbReference>
<dbReference type="EnsemblPlants" id="TraesSTA3B03G01599350.1">
    <property type="protein sequence ID" value="TraesSTA3B03G01599350.1.CDS1"/>
    <property type="gene ID" value="TraesSTA3B03G01599350"/>
</dbReference>
<dbReference type="EnsemblPlants" id="TraesSYM3B03G01630630.1">
    <property type="protein sequence ID" value="TraesSYM3B03G01630630.1.CDS1"/>
    <property type="gene ID" value="TraesSYM3B03G01630630"/>
</dbReference>
<dbReference type="GeneID" id="803156"/>
<dbReference type="Gramene" id="TraesARI1D03G00460990.1">
    <property type="protein sequence ID" value="TraesARI1D03G00460990.1.CDS1"/>
    <property type="gene ID" value="TraesARI1D03G00460990"/>
</dbReference>
<dbReference type="Gramene" id="TraesARI3B03G01635210.1">
    <property type="protein sequence ID" value="TraesARI3B03G01635210.1.CDS1"/>
    <property type="gene ID" value="TraesARI3B03G01635210"/>
</dbReference>
<dbReference type="Gramene" id="TraesCS2B03G0703200.1">
    <property type="protein sequence ID" value="TraesCS2B03G0703200.1.CDS1"/>
    <property type="gene ID" value="TraesCS2B03G0703200"/>
</dbReference>
<dbReference type="Gramene" id="TraesCS3B02G187700.1">
    <property type="protein sequence ID" value="TraesCS3B02G187700.1.cds1"/>
    <property type="gene ID" value="TraesCS3B02G187700"/>
</dbReference>
<dbReference type="Gramene" id="TraesCS3B03G0449800.1">
    <property type="protein sequence ID" value="TraesCS3B03G0449800.1.CDS1"/>
    <property type="gene ID" value="TraesCS3B03G0449800"/>
</dbReference>
<dbReference type="Gramene" id="TraesCS5D03G1230700.1">
    <property type="protein sequence ID" value="TraesCS5D03G1230700.1.CDS1"/>
    <property type="gene ID" value="TraesCS5D03G1230700"/>
</dbReference>
<dbReference type="Gramene" id="TraesJAG3B03G01616950.1">
    <property type="protein sequence ID" value="TraesJAG3B03G01616950.1.CDS1"/>
    <property type="gene ID" value="TraesJAG3B03G01616950"/>
</dbReference>
<dbReference type="Gramene" id="TraesJUL3B03G01621000.1">
    <property type="protein sequence ID" value="TraesJUL3B03G01621000.1.CDS1"/>
    <property type="gene ID" value="TraesJUL3B03G01621000"/>
</dbReference>
<dbReference type="Gramene" id="TraesKAR3B01G0143540.1">
    <property type="protein sequence ID" value="cds.TraesKAR3B01G0143540.1"/>
    <property type="gene ID" value="TraesKAR3B01G0143540"/>
</dbReference>
<dbReference type="Gramene" id="TraesKAR6B01G0219320.1">
    <property type="protein sequence ID" value="cds.TraesKAR6B01G0219320.1"/>
    <property type="gene ID" value="TraesKAR6B01G0219320"/>
</dbReference>
<dbReference type="Gramene" id="TraesKARUn01G0026880.1">
    <property type="protein sequence ID" value="cds.TraesKARUn01G0026880.1"/>
    <property type="gene ID" value="TraesKARUn01G0026880"/>
</dbReference>
<dbReference type="Gramene" id="TraesKARUn01G0027180.1">
    <property type="protein sequence ID" value="cds.TraesKARUn01G0027180.1"/>
    <property type="gene ID" value="TraesKARUn01G0027180"/>
</dbReference>
<dbReference type="Gramene" id="TraesKARUn01G0027300.1">
    <property type="protein sequence ID" value="cds.TraesKARUn01G0027300.1"/>
    <property type="gene ID" value="TraesKARUn01G0027300"/>
</dbReference>
<dbReference type="Gramene" id="TraesKARUn01G0028360.1">
    <property type="protein sequence ID" value="cds.TraesKARUn01G0028360.1"/>
    <property type="gene ID" value="TraesKARUn01G0028360"/>
</dbReference>
<dbReference type="Gramene" id="TraesKARUn01G0028780.1">
    <property type="protein sequence ID" value="cds.TraesKARUn01G0028780.1"/>
    <property type="gene ID" value="TraesKARUn01G0028780"/>
</dbReference>
<dbReference type="Gramene" id="TraesKARUn01G0029750.1">
    <property type="protein sequence ID" value="cds.TraesKARUn01G0029750.1"/>
    <property type="gene ID" value="TraesKARUn01G0029750"/>
</dbReference>
<dbReference type="Gramene" id="TraesKARUn01G0030100.1">
    <property type="protein sequence ID" value="cds.TraesKARUn01G0030100.1"/>
    <property type="gene ID" value="TraesKARUn01G0030100"/>
</dbReference>
<dbReference type="Gramene" id="TraesKARUn01G0030970.1">
    <property type="protein sequence ID" value="cds.TraesKARUn01G0030970.1"/>
    <property type="gene ID" value="TraesKARUn01G0030970"/>
</dbReference>
<dbReference type="Gramene" id="TraesKARUn01G0032910.1">
    <property type="protein sequence ID" value="cds.TraesKARUn01G0032910.1"/>
    <property type="gene ID" value="TraesKARUn01G0032910"/>
</dbReference>
<dbReference type="Gramene" id="TraesKARUn01G0032970.1">
    <property type="protein sequence ID" value="cds.TraesKARUn01G0032970.1"/>
    <property type="gene ID" value="TraesKARUn01G0032970"/>
</dbReference>
<dbReference type="Gramene" id="TraesKARUn01G0033280.1">
    <property type="protein sequence ID" value="cds.TraesKARUn01G0033280.1"/>
    <property type="gene ID" value="TraesKARUn01G0033280"/>
</dbReference>
<dbReference type="Gramene" id="TraesKARUn01G0033420.1">
    <property type="protein sequence ID" value="cds.TraesKARUn01G0033420.1"/>
    <property type="gene ID" value="TraesKARUn01G0033420"/>
</dbReference>
<dbReference type="Gramene" id="TraesKARUn01G0033450.1">
    <property type="protein sequence ID" value="cds.TraesKARUn01G0033450.1"/>
    <property type="gene ID" value="TraesKARUn01G0033450"/>
</dbReference>
<dbReference type="Gramene" id="TraesKARUn01G0033780.1">
    <property type="protein sequence ID" value="cds.TraesKARUn01G0033780.1"/>
    <property type="gene ID" value="TraesKARUn01G0033780"/>
</dbReference>
<dbReference type="Gramene" id="TraesKARUn01G0034100.1">
    <property type="protein sequence ID" value="cds.TraesKARUn01G0034100.1"/>
    <property type="gene ID" value="TraesKARUn01G0034100"/>
</dbReference>
<dbReference type="Gramene" id="TraesKARUn01G0034310.1">
    <property type="protein sequence ID" value="cds.TraesKARUn01G0034310.1"/>
    <property type="gene ID" value="TraesKARUn01G0034310"/>
</dbReference>
<dbReference type="Gramene" id="TraesKARUn01G0034370.1">
    <property type="protein sequence ID" value="cds.TraesKARUn01G0034370.1"/>
    <property type="gene ID" value="TraesKARUn01G0034370"/>
</dbReference>
<dbReference type="Gramene" id="TraesKARUn01G0034560.1">
    <property type="protein sequence ID" value="cds.TraesKARUn01G0034560.1"/>
    <property type="gene ID" value="TraesKARUn01G0034560"/>
</dbReference>
<dbReference type="Gramene" id="TraesKARUn01G0034630.1">
    <property type="protein sequence ID" value="cds.TraesKARUn01G0034630.1"/>
    <property type="gene ID" value="TraesKARUn01G0034630"/>
</dbReference>
<dbReference type="Gramene" id="TraesKARUn01G0034750.1">
    <property type="protein sequence ID" value="cds.TraesKARUn01G0034750.1"/>
    <property type="gene ID" value="TraesKARUn01G0034750"/>
</dbReference>
<dbReference type="Gramene" id="TraesKARUn01G0034840.1">
    <property type="protein sequence ID" value="cds.TraesKARUn01G0034840.1"/>
    <property type="gene ID" value="TraesKARUn01G0034840"/>
</dbReference>
<dbReference type="Gramene" id="TraesKARUn01G0036210.1">
    <property type="protein sequence ID" value="cds.TraesKARUn01G0036210.1"/>
    <property type="gene ID" value="TraesKARUn01G0036210"/>
</dbReference>
<dbReference type="Gramene" id="TraesKARUn01G0037060.1">
    <property type="protein sequence ID" value="cds.TraesKARUn01G0037060.1"/>
    <property type="gene ID" value="TraesKARUn01G0037060"/>
</dbReference>
<dbReference type="Gramene" id="TraesKARUn01G0037120.1">
    <property type="protein sequence ID" value="cds.TraesKARUn01G0037120.1"/>
    <property type="gene ID" value="TraesKARUn01G0037120"/>
</dbReference>
<dbReference type="Gramene" id="TraesKARUn01G0037480.1">
    <property type="protein sequence ID" value="cds.TraesKARUn01G0037480.1"/>
    <property type="gene ID" value="TraesKARUn01G0037480"/>
</dbReference>
<dbReference type="Gramene" id="TraesKARUn01G0060320.1">
    <property type="protein sequence ID" value="cds.TraesKARUn01G0060320.1"/>
    <property type="gene ID" value="TraesKARUn01G0060320"/>
</dbReference>
<dbReference type="Gramene" id="TraesKARUn01G0060550.1">
    <property type="protein sequence ID" value="cds.TraesKARUn01G0060550.1"/>
    <property type="gene ID" value="TraesKARUn01G0060550"/>
</dbReference>
<dbReference type="Gramene" id="TraesKARUn01G0060970.1">
    <property type="protein sequence ID" value="cds.TraesKARUn01G0060970.1"/>
    <property type="gene ID" value="TraesKARUn01G0060970"/>
</dbReference>
<dbReference type="Gramene" id="TraesKARUn01G0061410.1">
    <property type="protein sequence ID" value="cds.TraesKARUn01G0061410.1"/>
    <property type="gene ID" value="TraesKARUn01G0061410"/>
</dbReference>
<dbReference type="Gramene" id="TraesKARUn01G0064640.1">
    <property type="protein sequence ID" value="cds.TraesKARUn01G0064640.1"/>
    <property type="gene ID" value="TraesKARUn01G0064640"/>
</dbReference>
<dbReference type="Gramene" id="TraesKARUn01G0066110.1">
    <property type="protein sequence ID" value="cds.TraesKARUn01G0066110.1"/>
    <property type="gene ID" value="TraesKARUn01G0066110"/>
</dbReference>
<dbReference type="Gramene" id="TraesKARUn01G0066640.1">
    <property type="protein sequence ID" value="cds.TraesKARUn01G0066640.1"/>
    <property type="gene ID" value="TraesKARUn01G0066640"/>
</dbReference>
<dbReference type="Gramene" id="TraesKARUn01G0067180.1">
    <property type="protein sequence ID" value="cds.TraesKARUn01G0067180.1"/>
    <property type="gene ID" value="TraesKARUn01G0067180"/>
</dbReference>
<dbReference type="Gramene" id="TraesKARUn01G0067440.1">
    <property type="protein sequence ID" value="cds.TraesKARUn01G0067440.1"/>
    <property type="gene ID" value="TraesKARUn01G0067440"/>
</dbReference>
<dbReference type="Gramene" id="TraesKARUn01G0068680.1">
    <property type="protein sequence ID" value="cds.TraesKARUn01G0068680.1"/>
    <property type="gene ID" value="TraesKARUn01G0068680"/>
</dbReference>
<dbReference type="Gramene" id="TraesKARUn01G0068730.1">
    <property type="protein sequence ID" value="cds.TraesKARUn01G0068730.1"/>
    <property type="gene ID" value="TraesKARUn01G0068730"/>
</dbReference>
<dbReference type="Gramene" id="TraesKARUn01G0069020.1">
    <property type="protein sequence ID" value="cds.TraesKARUn01G0069020.1"/>
    <property type="gene ID" value="TraesKARUn01G0069020"/>
</dbReference>
<dbReference type="Gramene" id="TraesKARUn01G0069090.1">
    <property type="protein sequence ID" value="cds.TraesKARUn01G0069090.1"/>
    <property type="gene ID" value="TraesKARUn01G0069090"/>
</dbReference>
<dbReference type="Gramene" id="TraesKARUn01G0069180.1">
    <property type="protein sequence ID" value="cds.TraesKARUn01G0069180.1"/>
    <property type="gene ID" value="TraesKARUn01G0069180"/>
</dbReference>
<dbReference type="Gramene" id="TraesKARUn01G0069530.1">
    <property type="protein sequence ID" value="cds.TraesKARUn01G0069530.1"/>
    <property type="gene ID" value="TraesKARUn01G0069530"/>
</dbReference>
<dbReference type="Gramene" id="TraesKARUn01G0069980.1">
    <property type="protein sequence ID" value="cds.TraesKARUn01G0069980.1"/>
    <property type="gene ID" value="TraesKARUn01G0069980"/>
</dbReference>
<dbReference type="Gramene" id="TraesKARUn01G0070020.1">
    <property type="protein sequence ID" value="cds.TraesKARUn01G0070020.1"/>
    <property type="gene ID" value="TraesKARUn01G0070020"/>
</dbReference>
<dbReference type="Gramene" id="TraesKARUn01G0070110.1">
    <property type="protein sequence ID" value="cds.TraesKARUn01G0070110.1"/>
    <property type="gene ID" value="TraesKARUn01G0070110"/>
</dbReference>
<dbReference type="Gramene" id="TraesKARUn01G0071500.1">
    <property type="protein sequence ID" value="cds.TraesKARUn01G0071500.1"/>
    <property type="gene ID" value="TraesKARUn01G0071500"/>
</dbReference>
<dbReference type="Gramene" id="TraesKARUn01G0073700.1">
    <property type="protein sequence ID" value="cds.TraesKARUn01G0073700.1"/>
    <property type="gene ID" value="TraesKARUn01G0073700"/>
</dbReference>
<dbReference type="Gramene" id="TraesKARUn01G0075290.1">
    <property type="protein sequence ID" value="cds.TraesKARUn01G0075290.1"/>
    <property type="gene ID" value="TraesKARUn01G0075290"/>
</dbReference>
<dbReference type="Gramene" id="TraesKARUn01G0080910.1">
    <property type="protein sequence ID" value="cds.TraesKARUn01G0080910.1"/>
    <property type="gene ID" value="TraesKARUn01G0080910"/>
</dbReference>
<dbReference type="Gramene" id="TraesKARUn01G0083280.1">
    <property type="protein sequence ID" value="cds.TraesKARUn01G0083280.1"/>
    <property type="gene ID" value="TraesKARUn01G0083280"/>
</dbReference>
<dbReference type="Gramene" id="TraesKARUn01G0085990.1">
    <property type="protein sequence ID" value="cds.TraesKARUn01G0085990.1"/>
    <property type="gene ID" value="TraesKARUn01G0085990"/>
</dbReference>
<dbReference type="Gramene" id="TraesKARUn01G0087590.1">
    <property type="protein sequence ID" value="cds.TraesKARUn01G0087590.1"/>
    <property type="gene ID" value="TraesKARUn01G0087590"/>
</dbReference>
<dbReference type="Gramene" id="TraesKARUn01G0091870.1">
    <property type="protein sequence ID" value="cds.TraesKARUn01G0091870.1"/>
    <property type="gene ID" value="TraesKARUn01G0091870"/>
</dbReference>
<dbReference type="Gramene" id="TraesKARUn01G0092200.1">
    <property type="protein sequence ID" value="cds.TraesKARUn01G0092200.1"/>
    <property type="gene ID" value="TraesKARUn01G0092200"/>
</dbReference>
<dbReference type="Gramene" id="TraesKARUn01G0094130.1">
    <property type="protein sequence ID" value="cds.TraesKARUn01G0094130.1"/>
    <property type="gene ID" value="TraesKARUn01G0094130"/>
</dbReference>
<dbReference type="Gramene" id="TraesKARUn01G0096100.1">
    <property type="protein sequence ID" value="cds.TraesKARUn01G0096100.1"/>
    <property type="gene ID" value="TraesKARUn01G0096100"/>
</dbReference>
<dbReference type="Gramene" id="TraesKARUn01G0097050.1">
    <property type="protein sequence ID" value="cds.TraesKARUn01G0097050.1"/>
    <property type="gene ID" value="TraesKARUn01G0097050"/>
</dbReference>
<dbReference type="Gramene" id="TraesKARUn01G0097100.1">
    <property type="protein sequence ID" value="cds.TraesKARUn01G0097100.1"/>
    <property type="gene ID" value="TraesKARUn01G0097100"/>
</dbReference>
<dbReference type="Gramene" id="TraesKARUn01G0099740.1">
    <property type="protein sequence ID" value="cds.TraesKARUn01G0099740.1"/>
    <property type="gene ID" value="TraesKARUn01G0099740"/>
</dbReference>
<dbReference type="Gramene" id="TraesKARUn01G0100310.1">
    <property type="protein sequence ID" value="cds.TraesKARUn01G0100310.1"/>
    <property type="gene ID" value="TraesKARUn01G0100310"/>
</dbReference>
<dbReference type="Gramene" id="TraesKARUn01G0102660.1">
    <property type="protein sequence ID" value="cds.TraesKARUn01G0102660.1"/>
    <property type="gene ID" value="TraesKARUn01G0102660"/>
</dbReference>
<dbReference type="Gramene" id="TraesKARUn01G0104970.1">
    <property type="protein sequence ID" value="cds.TraesKARUn01G0104970.1"/>
    <property type="gene ID" value="TraesKARUn01G0104970"/>
</dbReference>
<dbReference type="Gramene" id="TraesKARUn01G0105050.1">
    <property type="protein sequence ID" value="cds.TraesKARUn01G0105050.1"/>
    <property type="gene ID" value="TraesKARUn01G0105050"/>
</dbReference>
<dbReference type="Gramene" id="TraesKARUn01G0106270.1">
    <property type="protein sequence ID" value="cds.TraesKARUn01G0106270.1"/>
    <property type="gene ID" value="TraesKARUn01G0106270"/>
</dbReference>
<dbReference type="Gramene" id="TraesKARUn01G0106530.1">
    <property type="protein sequence ID" value="cds.TraesKARUn01G0106530.1"/>
    <property type="gene ID" value="TraesKARUn01G0106530"/>
</dbReference>
<dbReference type="Gramene" id="TraesKARUn01G0107590.1">
    <property type="protein sequence ID" value="cds.TraesKARUn01G0107590.1"/>
    <property type="gene ID" value="TraesKARUn01G0107590"/>
</dbReference>
<dbReference type="Gramene" id="TraesKARUn01G0108140.1">
    <property type="protein sequence ID" value="cds.TraesKARUn01G0108140.1"/>
    <property type="gene ID" value="TraesKARUn01G0108140"/>
</dbReference>
<dbReference type="Gramene" id="TraesKARUn01G0108280.1">
    <property type="protein sequence ID" value="cds.TraesKARUn01G0108280.1"/>
    <property type="gene ID" value="TraesKARUn01G0108280"/>
</dbReference>
<dbReference type="Gramene" id="TraesKARUn01G0108470.1">
    <property type="protein sequence ID" value="cds.TraesKARUn01G0108470.1"/>
    <property type="gene ID" value="TraesKARUn01G0108470"/>
</dbReference>
<dbReference type="Gramene" id="TraesKARUn01G0108710.1">
    <property type="protein sequence ID" value="cds.TraesKARUn01G0108710.1"/>
    <property type="gene ID" value="TraesKARUn01G0108710"/>
</dbReference>
<dbReference type="Gramene" id="TraesKARUn01G0110090.1">
    <property type="protein sequence ID" value="cds.TraesKARUn01G0110090.1"/>
    <property type="gene ID" value="TraesKARUn01G0110090"/>
</dbReference>
<dbReference type="Gramene" id="TraesKARUn01G0110540.1">
    <property type="protein sequence ID" value="cds.TraesKARUn01G0110540.1"/>
    <property type="gene ID" value="TraesKARUn01G0110540"/>
</dbReference>
<dbReference type="Gramene" id="TraesKARUn01G0112380.1">
    <property type="protein sequence ID" value="cds.TraesKARUn01G0112380.1"/>
    <property type="gene ID" value="TraesKARUn01G0112380"/>
</dbReference>
<dbReference type="Gramene" id="TraesKARUn01G0112440.1">
    <property type="protein sequence ID" value="cds.TraesKARUn01G0112440.1"/>
    <property type="gene ID" value="TraesKARUn01G0112440"/>
</dbReference>
<dbReference type="Gramene" id="TraesKARUn01G0113030.1">
    <property type="protein sequence ID" value="cds.TraesKARUn01G0113030.1"/>
    <property type="gene ID" value="TraesKARUn01G0113030"/>
</dbReference>
<dbReference type="Gramene" id="TraesKARUn01G0114290.1">
    <property type="protein sequence ID" value="cds.TraesKARUn01G0114290.1"/>
    <property type="gene ID" value="TraesKARUn01G0114290"/>
</dbReference>
<dbReference type="Gramene" id="TraesKARUn01G0114890.1">
    <property type="protein sequence ID" value="cds.TraesKARUn01G0114890.1"/>
    <property type="gene ID" value="TraesKARUn01G0114890"/>
</dbReference>
<dbReference type="Gramene" id="TraesKARUn01G0116010.1">
    <property type="protein sequence ID" value="cds.TraesKARUn01G0116010.1"/>
    <property type="gene ID" value="TraesKARUn01G0116010"/>
</dbReference>
<dbReference type="Gramene" id="TraesKARUn01G0116590.1">
    <property type="protein sequence ID" value="cds.TraesKARUn01G0116590.1"/>
    <property type="gene ID" value="TraesKARUn01G0116590"/>
</dbReference>
<dbReference type="Gramene" id="TraesKARUn01G0118680.1">
    <property type="protein sequence ID" value="cds.TraesKARUn01G0118680.1"/>
    <property type="gene ID" value="TraesKARUn01G0118680"/>
</dbReference>
<dbReference type="Gramene" id="TraesKARUn01G0123960.1">
    <property type="protein sequence ID" value="cds.TraesKARUn01G0123960.1"/>
    <property type="gene ID" value="TraesKARUn01G0123960"/>
</dbReference>
<dbReference type="Gramene" id="TraesKARUn01G0125590.1">
    <property type="protein sequence ID" value="cds.TraesKARUn01G0125590.1"/>
    <property type="gene ID" value="TraesKARUn01G0125590"/>
</dbReference>
<dbReference type="Gramene" id="TraesKARUn01G0125790.1">
    <property type="protein sequence ID" value="cds.TraesKARUn01G0125790.1"/>
    <property type="gene ID" value="TraesKARUn01G0125790"/>
</dbReference>
<dbReference type="Gramene" id="TraesKARUn01G0128100.1">
    <property type="protein sequence ID" value="cds.TraesKARUn01G0128100.1"/>
    <property type="gene ID" value="TraesKARUn01G0128100"/>
</dbReference>
<dbReference type="Gramene" id="TraesKARUn01G0129210.1">
    <property type="protein sequence ID" value="cds.TraesKARUn01G0129210.1"/>
    <property type="gene ID" value="TraesKARUn01G0129210"/>
</dbReference>
<dbReference type="Gramene" id="TraesKARUn01G0130410.1">
    <property type="protein sequence ID" value="cds.TraesKARUn01G0130410.1"/>
    <property type="gene ID" value="TraesKARUn01G0130410"/>
</dbReference>
<dbReference type="Gramene" id="TraesKARUn01G0132200.1">
    <property type="protein sequence ID" value="cds.TraesKARUn01G0132200.1"/>
    <property type="gene ID" value="TraesKARUn01G0132200"/>
</dbReference>
<dbReference type="Gramene" id="TraesKARUn01G0132440.1">
    <property type="protein sequence ID" value="cds.TraesKARUn01G0132440.1"/>
    <property type="gene ID" value="TraesKARUn01G0132440"/>
</dbReference>
<dbReference type="Gramene" id="TraesKARUn01G0132490.1">
    <property type="protein sequence ID" value="cds.TraesKARUn01G0132490.1"/>
    <property type="gene ID" value="TraesKARUn01G0132490"/>
</dbReference>
<dbReference type="Gramene" id="TraesKARUn01G0132710.1">
    <property type="protein sequence ID" value="cds.TraesKARUn01G0132710.1"/>
    <property type="gene ID" value="TraesKARUn01G0132710"/>
</dbReference>
<dbReference type="Gramene" id="TraesKARUn01G0132900.1">
    <property type="protein sequence ID" value="cds.TraesKARUn01G0132900.1"/>
    <property type="gene ID" value="TraesKARUn01G0132900"/>
</dbReference>
<dbReference type="Gramene" id="TraesKARUn01G0134130.1">
    <property type="protein sequence ID" value="cds.TraesKARUn01G0134130.1"/>
    <property type="gene ID" value="TraesKARUn01G0134130"/>
</dbReference>
<dbReference type="Gramene" id="TraesKARUn01G0136620.1">
    <property type="protein sequence ID" value="cds.TraesKARUn01G0136620.1"/>
    <property type="gene ID" value="TraesKARUn01G0136620"/>
</dbReference>
<dbReference type="Gramene" id="TraesKARUn01G0137430.1">
    <property type="protein sequence ID" value="cds.TraesKARUn01G0137430.1"/>
    <property type="gene ID" value="TraesKARUn01G0137430"/>
</dbReference>
<dbReference type="Gramene" id="TraesKARUn01G0137650.1">
    <property type="protein sequence ID" value="cds.TraesKARUn01G0137650.1"/>
    <property type="gene ID" value="TraesKARUn01G0137650"/>
</dbReference>
<dbReference type="Gramene" id="TraesKARUn01G0137960.1">
    <property type="protein sequence ID" value="cds.TraesKARUn01G0137960.1"/>
    <property type="gene ID" value="TraesKARUn01G0137960"/>
</dbReference>
<dbReference type="Gramene" id="TraesKARUn01G0142640.1">
    <property type="protein sequence ID" value="cds.TraesKARUn01G0142640.1"/>
    <property type="gene ID" value="TraesKARUn01G0142640"/>
</dbReference>
<dbReference type="Gramene" id="TraesKARUn01G0143710.1">
    <property type="protein sequence ID" value="cds.TraesKARUn01G0143710.1"/>
    <property type="gene ID" value="TraesKARUn01G0143710"/>
</dbReference>
<dbReference type="Gramene" id="TraesKARUn01G0144930.1">
    <property type="protein sequence ID" value="cds.TraesKARUn01G0144930.1"/>
    <property type="gene ID" value="TraesKARUn01G0144930"/>
</dbReference>
<dbReference type="Gramene" id="TraesKARUn01G0146530.1">
    <property type="protein sequence ID" value="cds.TraesKARUn01G0146530.1"/>
    <property type="gene ID" value="TraesKARUn01G0146530"/>
</dbReference>
<dbReference type="Gramene" id="TraesKARUn01G0147670.1">
    <property type="protein sequence ID" value="cds.TraesKARUn01G0147670.1"/>
    <property type="gene ID" value="TraesKARUn01G0147670"/>
</dbReference>
<dbReference type="Gramene" id="TraesKARUn01G0147790.1">
    <property type="protein sequence ID" value="cds.TraesKARUn01G0147790.1"/>
    <property type="gene ID" value="TraesKARUn01G0147790"/>
</dbReference>
<dbReference type="Gramene" id="TraesKARUn01G0149020.1">
    <property type="protein sequence ID" value="cds.TraesKARUn01G0149020.1"/>
    <property type="gene ID" value="TraesKARUn01G0149020"/>
</dbReference>
<dbReference type="Gramene" id="TraesKARUn01G0149470.1">
    <property type="protein sequence ID" value="cds.TraesKARUn01G0149470.1"/>
    <property type="gene ID" value="TraesKARUn01G0149470"/>
</dbReference>
<dbReference type="Gramene" id="TraesKARUn01G0150040.1">
    <property type="protein sequence ID" value="cds.TraesKARUn01G0150040.1"/>
    <property type="gene ID" value="TraesKARUn01G0150040"/>
</dbReference>
<dbReference type="Gramene" id="TraesKARUn01G0150620.1">
    <property type="protein sequence ID" value="cds.TraesKARUn01G0150620.1"/>
    <property type="gene ID" value="TraesKARUn01G0150620"/>
</dbReference>
<dbReference type="Gramene" id="TraesKARUn01G0152070.1">
    <property type="protein sequence ID" value="cds.TraesKARUn01G0152070.1"/>
    <property type="gene ID" value="TraesKARUn01G0152070"/>
</dbReference>
<dbReference type="Gramene" id="TraesKARUn01G0152630.1">
    <property type="protein sequence ID" value="cds.TraesKARUn01G0152630.1"/>
    <property type="gene ID" value="TraesKARUn01G0152630"/>
</dbReference>
<dbReference type="Gramene" id="TraesKARUn01G0153370.1">
    <property type="protein sequence ID" value="cds.TraesKARUn01G0153370.1"/>
    <property type="gene ID" value="TraesKARUn01G0153370"/>
</dbReference>
<dbReference type="Gramene" id="TraesKARUn01G0154100.1">
    <property type="protein sequence ID" value="cds.TraesKARUn01G0154100.1"/>
    <property type="gene ID" value="TraesKARUn01G0154100"/>
</dbReference>
<dbReference type="Gramene" id="TraesKARUn01G0154800.1">
    <property type="protein sequence ID" value="cds.TraesKARUn01G0154800.1"/>
    <property type="gene ID" value="TraesKARUn01G0154800"/>
</dbReference>
<dbReference type="Gramene" id="TraesKARUn01G0155170.1">
    <property type="protein sequence ID" value="cds.TraesKARUn01G0155170.1"/>
    <property type="gene ID" value="TraesKARUn01G0155170"/>
</dbReference>
<dbReference type="Gramene" id="TraesKARUn01G0156450.1">
    <property type="protein sequence ID" value="cds.TraesKARUn01G0156450.1"/>
    <property type="gene ID" value="TraesKARUn01G0156450"/>
</dbReference>
<dbReference type="Gramene" id="TraesKARUn01G0157390.1">
    <property type="protein sequence ID" value="cds.TraesKARUn01G0157390.1"/>
    <property type="gene ID" value="TraesKARUn01G0157390"/>
</dbReference>
<dbReference type="Gramene" id="TraesKARUn01G0157550.1">
    <property type="protein sequence ID" value="cds.TraesKARUn01G0157550.1"/>
    <property type="gene ID" value="TraesKARUn01G0157550"/>
</dbReference>
<dbReference type="Gramene" id="TraesKARUn01G0158700.1">
    <property type="protein sequence ID" value="cds.TraesKARUn01G0158700.1"/>
    <property type="gene ID" value="TraesKARUn01G0158700"/>
</dbReference>
<dbReference type="Gramene" id="TraesKARUn01G0159360.1">
    <property type="protein sequence ID" value="cds.TraesKARUn01G0159360.1"/>
    <property type="gene ID" value="TraesKARUn01G0159360"/>
</dbReference>
<dbReference type="Gramene" id="TraesKARUn01G0159720.1">
    <property type="protein sequence ID" value="cds.TraesKARUn01G0159720.1"/>
    <property type="gene ID" value="TraesKARUn01G0159720"/>
</dbReference>
<dbReference type="Gramene" id="TraesKARUn01G0159830.1">
    <property type="protein sequence ID" value="cds.TraesKARUn01G0159830.1"/>
    <property type="gene ID" value="TraesKARUn01G0159830"/>
</dbReference>
<dbReference type="Gramene" id="TraesKARUn01G0160980.1">
    <property type="protein sequence ID" value="cds.TraesKARUn01G0160980.1"/>
    <property type="gene ID" value="TraesKARUn01G0160980"/>
</dbReference>
<dbReference type="Gramene" id="TraesKARUn01G0161540.1">
    <property type="protein sequence ID" value="cds.TraesKARUn01G0161540.1"/>
    <property type="gene ID" value="TraesKARUn01G0161540"/>
</dbReference>
<dbReference type="Gramene" id="TraesKARUn01G0163160.1">
    <property type="protein sequence ID" value="cds.TraesKARUn01G0163160.1"/>
    <property type="gene ID" value="TraesKARUn01G0163160"/>
</dbReference>
<dbReference type="Gramene" id="TraesKARUn01G0163400.1">
    <property type="protein sequence ID" value="cds.TraesKARUn01G0163400.1"/>
    <property type="gene ID" value="TraesKARUn01G0163400"/>
</dbReference>
<dbReference type="Gramene" id="TraesKARUn01G0163480.1">
    <property type="protein sequence ID" value="cds.TraesKARUn01G0163480.1"/>
    <property type="gene ID" value="TraesKARUn01G0163480"/>
</dbReference>
<dbReference type="Gramene" id="TraesKARUn01G0165890.1">
    <property type="protein sequence ID" value="cds.TraesKARUn01G0165890.1"/>
    <property type="gene ID" value="TraesKARUn01G0165890"/>
</dbReference>
<dbReference type="Gramene" id="TraesKARUn01G0165990.1">
    <property type="protein sequence ID" value="cds.TraesKARUn01G0165990.1"/>
    <property type="gene ID" value="TraesKARUn01G0165990"/>
</dbReference>
<dbReference type="Gramene" id="TraesKARUn01G0166120.1">
    <property type="protein sequence ID" value="cds.TraesKARUn01G0166120.1"/>
    <property type="gene ID" value="TraesKARUn01G0166120"/>
</dbReference>
<dbReference type="Gramene" id="TraesKARUn01G0167010.1">
    <property type="protein sequence ID" value="cds.TraesKARUn01G0167010.1"/>
    <property type="gene ID" value="TraesKARUn01G0167010"/>
</dbReference>
<dbReference type="Gramene" id="TraesKARUn01G0167410.1">
    <property type="protein sequence ID" value="cds.TraesKARUn01G0167410.1"/>
    <property type="gene ID" value="TraesKARUn01G0167410"/>
</dbReference>
<dbReference type="Gramene" id="TraesKARUn01G0169270.1">
    <property type="protein sequence ID" value="cds.TraesKARUn01G0169270.1"/>
    <property type="gene ID" value="TraesKARUn01G0169270"/>
</dbReference>
<dbReference type="Gramene" id="TraesKARUn01G0170810.1">
    <property type="protein sequence ID" value="cds.TraesKARUn01G0170810.1"/>
    <property type="gene ID" value="TraesKARUn01G0170810"/>
</dbReference>
<dbReference type="Gramene" id="TraesKARUn01G0171450.1">
    <property type="protein sequence ID" value="cds.TraesKARUn01G0171450.1"/>
    <property type="gene ID" value="TraesKARUn01G0171450"/>
</dbReference>
<dbReference type="Gramene" id="TraesKARUn01G0172350.1">
    <property type="protein sequence ID" value="cds.TraesKARUn01G0172350.1"/>
    <property type="gene ID" value="TraesKARUn01G0172350"/>
</dbReference>
<dbReference type="Gramene" id="TraesKARUn01G0173150.1">
    <property type="protein sequence ID" value="cds.TraesKARUn01G0173150.1"/>
    <property type="gene ID" value="TraesKARUn01G0173150"/>
</dbReference>
<dbReference type="Gramene" id="TraesKARUn01G0173680.1">
    <property type="protein sequence ID" value="cds.TraesKARUn01G0173680.1"/>
    <property type="gene ID" value="TraesKARUn01G0173680"/>
</dbReference>
<dbReference type="Gramene" id="TraesKARUn01G0173930.1">
    <property type="protein sequence ID" value="cds.TraesKARUn01G0173930.1"/>
    <property type="gene ID" value="TraesKARUn01G0173930"/>
</dbReference>
<dbReference type="Gramene" id="TraesKARUn01G0174430.1">
    <property type="protein sequence ID" value="cds.TraesKARUn01G0174430.1"/>
    <property type="gene ID" value="TraesKARUn01G0174430"/>
</dbReference>
<dbReference type="Gramene" id="TraesKARUn01G0175110.1">
    <property type="protein sequence ID" value="cds.TraesKARUn01G0175110.1"/>
    <property type="gene ID" value="TraesKARUn01G0175110"/>
</dbReference>
<dbReference type="Gramene" id="TraesKARUn01G0176510.1">
    <property type="protein sequence ID" value="cds.TraesKARUn01G0176510.1"/>
    <property type="gene ID" value="TraesKARUn01G0176510"/>
</dbReference>
<dbReference type="Gramene" id="TraesKARUn01G0177030.1">
    <property type="protein sequence ID" value="cds.TraesKARUn01G0177030.1"/>
    <property type="gene ID" value="TraesKARUn01G0177030"/>
</dbReference>
<dbReference type="Gramene" id="TraesKARUn01G0177940.1">
    <property type="protein sequence ID" value="cds.TraesKARUn01G0177940.1"/>
    <property type="gene ID" value="TraesKARUn01G0177940"/>
</dbReference>
<dbReference type="Gramene" id="TraesKARUn01G0178370.1">
    <property type="protein sequence ID" value="cds.TraesKARUn01G0178370.1"/>
    <property type="gene ID" value="TraesKARUn01G0178370"/>
</dbReference>
<dbReference type="Gramene" id="TraesKARUn01G0178610.1">
    <property type="protein sequence ID" value="cds.TraesKARUn01G0178610.1"/>
    <property type="gene ID" value="TraesKARUn01G0178610"/>
</dbReference>
<dbReference type="Gramene" id="TraesKARUn01G0178920.1">
    <property type="protein sequence ID" value="cds.TraesKARUn01G0178920.1"/>
    <property type="gene ID" value="TraesKARUn01G0178920"/>
</dbReference>
<dbReference type="Gramene" id="TraesKARUn01G0181510.1">
    <property type="protein sequence ID" value="cds.TraesKARUn01G0181510.1"/>
    <property type="gene ID" value="TraesKARUn01G0181510"/>
</dbReference>
<dbReference type="Gramene" id="TraesKARUn01G0181920.1">
    <property type="protein sequence ID" value="cds.TraesKARUn01G0181920.1"/>
    <property type="gene ID" value="TraesKARUn01G0181920"/>
</dbReference>
<dbReference type="Gramene" id="TraesKARUn01G0182680.1">
    <property type="protein sequence ID" value="cds.TraesKARUn01G0182680.1"/>
    <property type="gene ID" value="TraesKARUn01G0182680"/>
</dbReference>
<dbReference type="Gramene" id="TraesKARUn01G0184180.1">
    <property type="protein sequence ID" value="cds.TraesKARUn01G0184180.1"/>
    <property type="gene ID" value="TraesKARUn01G0184180"/>
</dbReference>
<dbReference type="Gramene" id="TraesKARUn01G0185270.1">
    <property type="protein sequence ID" value="cds.TraesKARUn01G0185270.1"/>
    <property type="gene ID" value="TraesKARUn01G0185270"/>
</dbReference>
<dbReference type="Gramene" id="TraesKARUn01G0187430.1">
    <property type="protein sequence ID" value="cds.TraesKARUn01G0187430.1"/>
    <property type="gene ID" value="TraesKARUn01G0187430"/>
</dbReference>
<dbReference type="Gramene" id="TraesKARUn01G0188580.1">
    <property type="protein sequence ID" value="cds.TraesKARUn01G0188580.1"/>
    <property type="gene ID" value="TraesKARUn01G0188580"/>
</dbReference>
<dbReference type="Gramene" id="TraesKARUn01G0189050.1">
    <property type="protein sequence ID" value="cds.TraesKARUn01G0189050.1"/>
    <property type="gene ID" value="TraesKARUn01G0189050"/>
</dbReference>
<dbReference type="Gramene" id="TraesKARUn01G0189430.1">
    <property type="protein sequence ID" value="cds.TraesKARUn01G0189430.1"/>
    <property type="gene ID" value="TraesKARUn01G0189430"/>
</dbReference>
<dbReference type="Gramene" id="TraesKARUn01G0189520.1">
    <property type="protein sequence ID" value="cds.TraesKARUn01G0189520.1"/>
    <property type="gene ID" value="TraesKARUn01G0189520"/>
</dbReference>
<dbReference type="Gramene" id="TraesKARUn01G0189740.1">
    <property type="protein sequence ID" value="cds.TraesKARUn01G0189740.1"/>
    <property type="gene ID" value="TraesKARUn01G0189740"/>
</dbReference>
<dbReference type="Gramene" id="TraesKARUn01G0191730.1">
    <property type="protein sequence ID" value="cds.TraesKARUn01G0191730.1"/>
    <property type="gene ID" value="TraesKARUn01G0191730"/>
</dbReference>
<dbReference type="Gramene" id="TraesKARUn01G0191810.1">
    <property type="protein sequence ID" value="cds.TraesKARUn01G0191810.1"/>
    <property type="gene ID" value="TraesKARUn01G0191810"/>
</dbReference>
<dbReference type="Gramene" id="TraesKARUn01G0192070.1">
    <property type="protein sequence ID" value="cds.TraesKARUn01G0192070.1"/>
    <property type="gene ID" value="TraesKARUn01G0192070"/>
</dbReference>
<dbReference type="Gramene" id="TraesLAC3B03G01549790.1">
    <property type="protein sequence ID" value="TraesLAC3B03G01549790.1.CDS1"/>
    <property type="gene ID" value="TraesLAC3B03G01549790"/>
</dbReference>
<dbReference type="Gramene" id="TraesLDM3B03G01608430.1">
    <property type="protein sequence ID" value="TraesLDM3B03G01608430.1.CDS1"/>
    <property type="gene ID" value="TraesLDM3B03G01608430"/>
</dbReference>
<dbReference type="Gramene" id="TraesNOR1A03G00037140.1">
    <property type="protein sequence ID" value="TraesNOR1A03G00037140.1.CDS1"/>
    <property type="gene ID" value="TraesNOR1A03G00037140"/>
</dbReference>
<dbReference type="Gramene" id="TraesNOR3B03G01628480.1">
    <property type="protein sequence ID" value="TraesNOR3B03G01628480.1.CDS1"/>
    <property type="gene ID" value="TraesNOR3B03G01628480"/>
</dbReference>
<dbReference type="Gramene" id="TraesPARA_EIv1.0_1003460.1">
    <property type="protein sequence ID" value="TraesPARA_EIv1.0_1003460.1.CDS1"/>
    <property type="gene ID" value="TraesPARA_EIv1.0_1003460"/>
</dbReference>
<dbReference type="Gramene" id="TraesPARA_EIv1.0_2644690.1">
    <property type="protein sequence ID" value="TraesPARA_EIv1.0_2644690.1.CDS1"/>
    <property type="gene ID" value="TraesPARA_EIv1.0_2644690"/>
</dbReference>
<dbReference type="Gramene" id="TraesPARA_EIv1.0_2645320.1">
    <property type="protein sequence ID" value="TraesPARA_EIv1.0_2645320.1.CDS1"/>
    <property type="gene ID" value="TraesPARA_EIv1.0_2645320"/>
</dbReference>
<dbReference type="Gramene" id="TraesPARA_EIv1.0_2647640.1">
    <property type="protein sequence ID" value="TraesPARA_EIv1.0_2647640.1.CDS1"/>
    <property type="gene ID" value="TraesPARA_EIv1.0_2647640"/>
</dbReference>
<dbReference type="Gramene" id="TraesPARA_EIv1.0_2653110.1">
    <property type="protein sequence ID" value="TraesPARA_EIv1.0_2653110.1.CDS1"/>
    <property type="gene ID" value="TraesPARA_EIv1.0_2653110"/>
</dbReference>
<dbReference type="Gramene" id="TraesRN1D0100324900.1">
    <property type="protein sequence ID" value="TraesRN1D0100324900.1"/>
    <property type="gene ID" value="TraesRN1D0100324900"/>
</dbReference>
<dbReference type="Gramene" id="TraesRN1D0100325100.1">
    <property type="protein sequence ID" value="TraesRN1D0100325100.1"/>
    <property type="gene ID" value="TraesRN1D0100325100"/>
</dbReference>
<dbReference type="Gramene" id="TraesRN1D0100325200.1">
    <property type="protein sequence ID" value="TraesRN1D0100325200.1"/>
    <property type="gene ID" value="TraesRN1D0100325200"/>
</dbReference>
<dbReference type="Gramene" id="TraesRN3A0101022700.1">
    <property type="protein sequence ID" value="TraesRN3A0101022700.1"/>
    <property type="gene ID" value="TraesRN3A0101022700"/>
</dbReference>
<dbReference type="Gramene" id="TraesRN3B0100440100.1">
    <property type="protein sequence ID" value="TraesRN3B0100440100.1"/>
    <property type="gene ID" value="TraesRN3B0100440100"/>
</dbReference>
<dbReference type="Gramene" id="TraesRN6D0100426800.1">
    <property type="protein sequence ID" value="TraesRN6D0100426800.1"/>
    <property type="gene ID" value="TraesRN6D0100426800"/>
</dbReference>
<dbReference type="Gramene" id="TraesSTA3B03G01599350.1">
    <property type="protein sequence ID" value="TraesSTA3B03G01599350.1.CDS1"/>
    <property type="gene ID" value="TraesSTA3B03G01599350"/>
</dbReference>
<dbReference type="Gramene" id="TraesSYM3B03G01630630.1">
    <property type="protein sequence ID" value="TraesSYM3B03G01630630.1.CDS1"/>
    <property type="gene ID" value="TraesSYM3B03G01630630"/>
</dbReference>
<dbReference type="KEGG" id="taes:803156"/>
<dbReference type="eggNOG" id="KOG0901">
    <property type="taxonomic scope" value="Eukaryota"/>
</dbReference>
<dbReference type="HOGENOM" id="CLU_095071_2_1_1"/>
<dbReference type="OrthoDB" id="733561at2759"/>
<dbReference type="Proteomes" id="UP000019116">
    <property type="component" value="Chloroplast"/>
</dbReference>
<dbReference type="ExpressionAtlas" id="Q95H51">
    <property type="expression patterns" value="baseline"/>
</dbReference>
<dbReference type="GO" id="GO:0009507">
    <property type="term" value="C:chloroplast"/>
    <property type="evidence" value="ECO:0007669"/>
    <property type="project" value="UniProtKB-SubCell"/>
</dbReference>
<dbReference type="GO" id="GO:0022625">
    <property type="term" value="C:cytosolic large ribosomal subunit"/>
    <property type="evidence" value="ECO:0000318"/>
    <property type="project" value="GO_Central"/>
</dbReference>
<dbReference type="GO" id="GO:0070180">
    <property type="term" value="F:large ribosomal subunit rRNA binding"/>
    <property type="evidence" value="ECO:0000318"/>
    <property type="project" value="GO_Central"/>
</dbReference>
<dbReference type="GO" id="GO:0003735">
    <property type="term" value="F:structural constituent of ribosome"/>
    <property type="evidence" value="ECO:0000318"/>
    <property type="project" value="GO_Central"/>
</dbReference>
<dbReference type="GO" id="GO:0006412">
    <property type="term" value="P:translation"/>
    <property type="evidence" value="ECO:0007669"/>
    <property type="project" value="UniProtKB-UniRule"/>
</dbReference>
<dbReference type="CDD" id="cd00337">
    <property type="entry name" value="Ribosomal_uL14"/>
    <property type="match status" value="1"/>
</dbReference>
<dbReference type="FunFam" id="2.40.150.20:FF:000002">
    <property type="entry name" value="50S ribosomal protein L14, chloroplastic"/>
    <property type="match status" value="1"/>
</dbReference>
<dbReference type="Gene3D" id="2.40.150.20">
    <property type="entry name" value="Ribosomal protein L14"/>
    <property type="match status" value="1"/>
</dbReference>
<dbReference type="HAMAP" id="MF_01367">
    <property type="entry name" value="Ribosomal_uL14"/>
    <property type="match status" value="1"/>
</dbReference>
<dbReference type="InterPro" id="IPR000218">
    <property type="entry name" value="Ribosomal_uL14"/>
</dbReference>
<dbReference type="InterPro" id="IPR005745">
    <property type="entry name" value="Ribosomal_uL14_bac-type"/>
</dbReference>
<dbReference type="InterPro" id="IPR019972">
    <property type="entry name" value="Ribosomal_uL14_CS"/>
</dbReference>
<dbReference type="InterPro" id="IPR036853">
    <property type="entry name" value="Ribosomal_uL14_sf"/>
</dbReference>
<dbReference type="NCBIfam" id="TIGR01067">
    <property type="entry name" value="rplN_bact"/>
    <property type="match status" value="1"/>
</dbReference>
<dbReference type="PANTHER" id="PTHR11761">
    <property type="entry name" value="50S/60S RIBOSOMAL PROTEIN L14/L23"/>
    <property type="match status" value="1"/>
</dbReference>
<dbReference type="PANTHER" id="PTHR11761:SF3">
    <property type="entry name" value="LARGE RIBOSOMAL SUBUNIT PROTEIN UL14M"/>
    <property type="match status" value="1"/>
</dbReference>
<dbReference type="Pfam" id="PF00238">
    <property type="entry name" value="Ribosomal_L14"/>
    <property type="match status" value="1"/>
</dbReference>
<dbReference type="SMART" id="SM01374">
    <property type="entry name" value="Ribosomal_L14"/>
    <property type="match status" value="1"/>
</dbReference>
<dbReference type="SUPFAM" id="SSF50193">
    <property type="entry name" value="Ribosomal protein L14"/>
    <property type="match status" value="1"/>
</dbReference>
<dbReference type="PROSITE" id="PS00049">
    <property type="entry name" value="RIBOSOMAL_L14"/>
    <property type="match status" value="1"/>
</dbReference>
<accession>Q95H51</accession>
<sequence>MIQPQTLLNVADNSGARKLMCIRVIGAAGNQRYARIGDVIVAVIKDALPQMPLERSEVIRAVIVRTCKEFKCEDGIIIRYDDNAAVIIDQKGNPKGTRVFGAIAEELRGLNFTKIVSLAPEVL</sequence>
<keyword id="KW-0150">Chloroplast</keyword>
<keyword id="KW-0934">Plastid</keyword>
<keyword id="KW-1185">Reference proteome</keyword>
<keyword id="KW-0687">Ribonucleoprotein</keyword>
<keyword id="KW-0689">Ribosomal protein</keyword>
<keyword id="KW-0694">RNA-binding</keyword>
<keyword id="KW-0699">rRNA-binding</keyword>
<geneLocation type="chloroplast"/>
<protein>
    <recommendedName>
        <fullName evidence="1">Large ribosomal subunit protein uL14c</fullName>
    </recommendedName>
    <alternativeName>
        <fullName evidence="2">50S ribosomal protein L14, chloroplastic</fullName>
    </alternativeName>
</protein>
<gene>
    <name evidence="1" type="primary">rpl14</name>
</gene>